<accession>Q1Q0T2</accession>
<dbReference type="EC" id="1.7.2.7" evidence="3"/>
<dbReference type="EMBL" id="CT573071">
    <property type="protein sequence ID" value="CAJ73613.1"/>
    <property type="molecule type" value="Genomic_DNA"/>
</dbReference>
<dbReference type="RefSeq" id="WP_099325812.1">
    <property type="nucleotide sequence ID" value="NZ_CP049055.1"/>
</dbReference>
<dbReference type="PDB" id="5C2V">
    <property type="method" value="X-ray"/>
    <property type="resolution" value="2.70 A"/>
    <property type="chains" value="A/D=28-809"/>
</dbReference>
<dbReference type="PDB" id="5C2W">
    <property type="method" value="X-ray"/>
    <property type="resolution" value="3.20 A"/>
    <property type="chains" value="A/D=28-809"/>
</dbReference>
<dbReference type="PDBsum" id="5C2V"/>
<dbReference type="PDBsum" id="5C2W"/>
<dbReference type="SMR" id="Q1Q0T2"/>
<dbReference type="DIP" id="DIP-61794N"/>
<dbReference type="IntAct" id="Q1Q0T2">
    <property type="interactions" value="2"/>
</dbReference>
<dbReference type="KEGG" id="ag:CAJ73613"/>
<dbReference type="OrthoDB" id="221261at2"/>
<dbReference type="BioCyc" id="MetaCyc:MONOMER-15348"/>
<dbReference type="BRENDA" id="1.7.2.7">
    <property type="organism ID" value="11008"/>
</dbReference>
<dbReference type="EvolutionaryTrace" id="Q1Q0T2"/>
<dbReference type="GO" id="GO:0044222">
    <property type="term" value="C:anammoxosome"/>
    <property type="evidence" value="ECO:0000314"/>
    <property type="project" value="CACAO"/>
</dbReference>
<dbReference type="GO" id="GO:0046872">
    <property type="term" value="F:metal ion binding"/>
    <property type="evidence" value="ECO:0007669"/>
    <property type="project" value="UniProtKB-KW"/>
</dbReference>
<dbReference type="GO" id="GO:0016491">
    <property type="term" value="F:oxidoreductase activity"/>
    <property type="evidence" value="ECO:0007669"/>
    <property type="project" value="UniProtKB-KW"/>
</dbReference>
<dbReference type="Gene3D" id="2.120.10.30">
    <property type="entry name" value="TolB, C-terminal domain"/>
    <property type="match status" value="1"/>
</dbReference>
<dbReference type="InterPro" id="IPR011042">
    <property type="entry name" value="6-blade_b-propeller_TolB-like"/>
</dbReference>
<dbReference type="InterPro" id="IPR040698">
    <property type="entry name" value="HZS_alpha_mid"/>
</dbReference>
<dbReference type="Pfam" id="PF18582">
    <property type="entry name" value="HZS_alpha"/>
    <property type="match status" value="1"/>
</dbReference>
<dbReference type="SUPFAM" id="SSF69304">
    <property type="entry name" value="Tricorn protease N-terminal domain"/>
    <property type="match status" value="1"/>
</dbReference>
<evidence type="ECO:0000255" key="1"/>
<evidence type="ECO:0000255" key="2">
    <source>
        <dbReference type="PROSITE-ProRule" id="PRU00433"/>
    </source>
</evidence>
<evidence type="ECO:0000269" key="3">
    <source>
    </source>
</evidence>
<evidence type="ECO:0000269" key="4">
    <source>
    </source>
</evidence>
<evidence type="ECO:0000303" key="5">
    <source>
    </source>
</evidence>
<evidence type="ECO:0000305" key="6">
    <source>
    </source>
</evidence>
<evidence type="ECO:0000312" key="7">
    <source>
        <dbReference type="EMBL" id="CAJ73613.1"/>
    </source>
</evidence>
<evidence type="ECO:0007744" key="8">
    <source>
        <dbReference type="PDB" id="5C2V"/>
    </source>
</evidence>
<evidence type="ECO:0007744" key="9">
    <source>
        <dbReference type="PDB" id="5C2W"/>
    </source>
</evidence>
<evidence type="ECO:0007829" key="10">
    <source>
        <dbReference type="PDB" id="5C2V"/>
    </source>
</evidence>
<evidence type="ECO:0007829" key="11">
    <source>
        <dbReference type="PDB" id="5C2W"/>
    </source>
</evidence>
<protein>
    <recommendedName>
        <fullName evidence="5">Hydrazine synthase subunit alpha</fullName>
        <shortName evidence="5">HZS-alpha</shortName>
        <ecNumber evidence="3">1.7.2.7</ecNumber>
    </recommendedName>
</protein>
<gene>
    <name evidence="7" type="ORF">kuste2861</name>
</gene>
<name>HZSA_KUEST</name>
<keyword id="KW-0002">3D-structure</keyword>
<keyword id="KW-0349">Heme</keyword>
<keyword id="KW-0408">Iron</keyword>
<keyword id="KW-0479">Metal-binding</keyword>
<keyword id="KW-0560">Oxidoreductase</keyword>
<keyword id="KW-0732">Signal</keyword>
<keyword id="KW-0862">Zinc</keyword>
<reference key="1">
    <citation type="journal article" date="2006" name="Nature">
        <title>Deciphering the evolution and metabolism of an anammox bacterium from a community genome.</title>
        <authorList>
            <person name="Strous M."/>
            <person name="Pelletier E."/>
            <person name="Mangenot S."/>
            <person name="Rattei T."/>
            <person name="Lehner A."/>
            <person name="Taylor M.W."/>
            <person name="Horn M."/>
            <person name="Daims H."/>
            <person name="Bartol-Mavel D."/>
            <person name="Wincker P."/>
            <person name="Barbe V."/>
            <person name="Fonknechten N."/>
            <person name="Vallenet D."/>
            <person name="Segurens B."/>
            <person name="Schenowitz-Truong C."/>
            <person name="Medigue C."/>
            <person name="Collingro A."/>
            <person name="Snel B."/>
            <person name="Dutilh B.E."/>
            <person name="Op den Camp H.J."/>
            <person name="van der Drift C."/>
            <person name="Cirpus I."/>
            <person name="van de Pas-Schoonen K.T."/>
            <person name="Harhangi H.R."/>
            <person name="van Niftrik L."/>
            <person name="Schmid M."/>
            <person name="Keltjens J."/>
            <person name="van de Vossenberg J."/>
            <person name="Kartal B."/>
            <person name="Meier H."/>
            <person name="Frishman D."/>
            <person name="Huynen M.A."/>
            <person name="Mewes H."/>
            <person name="Weissenbach J."/>
            <person name="Jetten M.S.M."/>
            <person name="Wagner M."/>
            <person name="Le Paslier D."/>
        </authorList>
    </citation>
    <scope>NUCLEOTIDE SEQUENCE [LARGE SCALE GENOMIC DNA]</scope>
</reference>
<reference key="2">
    <citation type="journal article" date="2011" name="Nature">
        <title>Molecular mechanism of anaerobic ammonium oxidation.</title>
        <authorList>
            <person name="Kartal B."/>
            <person name="Maalcke W.J."/>
            <person name="de Almeida N.M."/>
            <person name="Cirpus I."/>
            <person name="Gloerich J."/>
            <person name="Geerts W."/>
            <person name="Op den Camp H.J."/>
            <person name="Harhangi H.R."/>
            <person name="Janssen-Megens E.M."/>
            <person name="Francoijs K.J."/>
            <person name="Stunnenberg H.G."/>
            <person name="Keltjens J.T."/>
            <person name="Jetten M.S."/>
            <person name="Strous M."/>
        </authorList>
    </citation>
    <scope>FUNCTION</scope>
    <scope>CATALYTIC ACTIVITY</scope>
    <scope>SUBCELLULAR LOCATION</scope>
    <scope>PATHWAY</scope>
    <scope>INDUCTION</scope>
</reference>
<reference evidence="8 9" key="3">
    <citation type="journal article" date="2015" name="Nature">
        <title>The inner workings of the hydrazine synthase multiprotein complex.</title>
        <authorList>
            <person name="Dietl A."/>
            <person name="Ferousi C."/>
            <person name="Maalcke W.J."/>
            <person name="Menzel A."/>
            <person name="de Vries S."/>
            <person name="Keltjens J.T."/>
            <person name="Jetten M.S."/>
            <person name="Kartal B."/>
            <person name="Barends T.R."/>
        </authorList>
    </citation>
    <scope>X-RAY CRYSTALLOGRAPHY (2.70 ANGSTROMS) OF 28-809 IN COMPLEX WITH OTHER SUBUNITS OF THE HYDRAZINE SYNTHASE COMPLEX; ZINC AND HEMES</scope>
    <scope>COFACTOR</scope>
    <scope>FUNCTION</scope>
    <scope>DOMAIN</scope>
    <scope>REACTION MECHANISM</scope>
</reference>
<feature type="signal peptide" evidence="1">
    <location>
        <begin position="1"/>
        <end position="27"/>
    </location>
</feature>
<feature type="chain" id="PRO_5004195495" description="Hydrazine synthase subunit alpha">
    <location>
        <begin position="28"/>
        <end position="809"/>
    </location>
</feature>
<feature type="domain" description="Cytochrome c" evidence="2">
    <location>
        <begin position="633"/>
        <end position="792"/>
    </location>
</feature>
<feature type="binding site" evidence="4">
    <location>
        <position position="303"/>
    </location>
    <ligand>
        <name>Zn(2+)</name>
        <dbReference type="ChEBI" id="CHEBI:29105"/>
    </ligand>
</feature>
<feature type="binding site" description="covalent" evidence="4 8 9">
    <location>
        <position position="583"/>
    </location>
    <ligand>
        <name>heme</name>
        <dbReference type="ChEBI" id="CHEBI:30413"/>
        <label>1</label>
    </ligand>
</feature>
<feature type="binding site" description="covalent" evidence="4 8 9">
    <location>
        <position position="586"/>
    </location>
    <ligand>
        <name>heme</name>
        <dbReference type="ChEBI" id="CHEBI:30413"/>
        <label>1</label>
    </ligand>
</feature>
<feature type="binding site" evidence="4">
    <location>
        <position position="587"/>
    </location>
    <ligand>
        <name>Zn(2+)</name>
        <dbReference type="ChEBI" id="CHEBI:29105"/>
    </ligand>
</feature>
<feature type="binding site" description="axial binding residue" evidence="4 8 9">
    <location>
        <position position="591"/>
    </location>
    <ligand>
        <name>heme</name>
        <dbReference type="ChEBI" id="CHEBI:30413"/>
        <label>1</label>
    </ligand>
    <ligandPart>
        <name>Fe</name>
        <dbReference type="ChEBI" id="CHEBI:18248"/>
    </ligandPart>
</feature>
<feature type="binding site" description="covalent" evidence="4 8 9">
    <location>
        <position position="685"/>
    </location>
    <ligand>
        <name>heme</name>
        <dbReference type="ChEBI" id="CHEBI:30413"/>
        <label>2</label>
    </ligand>
</feature>
<feature type="binding site" description="covalent" evidence="4 8 9">
    <location>
        <position position="688"/>
    </location>
    <ligand>
        <name>heme</name>
        <dbReference type="ChEBI" id="CHEBI:30413"/>
        <label>2</label>
    </ligand>
</feature>
<feature type="binding site" description="axial binding residue" evidence="4 8 9">
    <location>
        <position position="689"/>
    </location>
    <ligand>
        <name>heme</name>
        <dbReference type="ChEBI" id="CHEBI:30413"/>
        <label>2</label>
    </ligand>
    <ligandPart>
        <name>Fe</name>
        <dbReference type="ChEBI" id="CHEBI:18248"/>
    </ligandPart>
</feature>
<feature type="binding site" description="axial binding residue" evidence="4 8 9">
    <location>
        <position position="772"/>
    </location>
    <ligand>
        <name>heme</name>
        <dbReference type="ChEBI" id="CHEBI:30413"/>
        <label>2</label>
    </ligand>
    <ligandPart>
        <name>Fe</name>
        <dbReference type="ChEBI" id="CHEBI:18248"/>
    </ligandPart>
</feature>
<feature type="strand" evidence="10">
    <location>
        <begin position="30"/>
        <end position="32"/>
    </location>
</feature>
<feature type="helix" evidence="10">
    <location>
        <begin position="45"/>
        <end position="52"/>
    </location>
</feature>
<feature type="strand" evidence="10">
    <location>
        <begin position="58"/>
        <end position="67"/>
    </location>
</feature>
<feature type="turn" evidence="10">
    <location>
        <begin position="68"/>
        <end position="70"/>
    </location>
</feature>
<feature type="helix" evidence="10">
    <location>
        <begin position="73"/>
        <end position="75"/>
    </location>
</feature>
<feature type="strand" evidence="10">
    <location>
        <begin position="85"/>
        <end position="90"/>
    </location>
</feature>
<feature type="turn" evidence="10">
    <location>
        <begin position="91"/>
        <end position="93"/>
    </location>
</feature>
<feature type="strand" evidence="10">
    <location>
        <begin position="96"/>
        <end position="99"/>
    </location>
</feature>
<feature type="strand" evidence="10">
    <location>
        <begin position="103"/>
        <end position="111"/>
    </location>
</feature>
<feature type="strand" evidence="10">
    <location>
        <begin position="113"/>
        <end position="124"/>
    </location>
</feature>
<feature type="strand" evidence="10">
    <location>
        <begin position="127"/>
        <end position="136"/>
    </location>
</feature>
<feature type="strand" evidence="10">
    <location>
        <begin position="149"/>
        <end position="158"/>
    </location>
</feature>
<feature type="strand" evidence="10">
    <location>
        <begin position="163"/>
        <end position="173"/>
    </location>
</feature>
<feature type="strand" evidence="10">
    <location>
        <begin position="181"/>
        <end position="188"/>
    </location>
</feature>
<feature type="strand" evidence="10">
    <location>
        <begin position="192"/>
        <end position="201"/>
    </location>
</feature>
<feature type="strand" evidence="10">
    <location>
        <begin position="213"/>
        <end position="218"/>
    </location>
</feature>
<feature type="helix" evidence="10">
    <location>
        <begin position="223"/>
        <end position="228"/>
    </location>
</feature>
<feature type="strand" evidence="10">
    <location>
        <begin position="234"/>
        <end position="238"/>
    </location>
</feature>
<feature type="turn" evidence="10">
    <location>
        <begin position="239"/>
        <end position="242"/>
    </location>
</feature>
<feature type="strand" evidence="10">
    <location>
        <begin position="243"/>
        <end position="247"/>
    </location>
</feature>
<feature type="strand" evidence="10">
    <location>
        <begin position="255"/>
        <end position="260"/>
    </location>
</feature>
<feature type="strand" evidence="10">
    <location>
        <begin position="266"/>
        <end position="272"/>
    </location>
</feature>
<feature type="turn" evidence="10">
    <location>
        <begin position="275"/>
        <end position="281"/>
    </location>
</feature>
<feature type="strand" evidence="10">
    <location>
        <begin position="283"/>
        <end position="289"/>
    </location>
</feature>
<feature type="strand" evidence="10">
    <location>
        <begin position="297"/>
        <end position="303"/>
    </location>
</feature>
<feature type="strand" evidence="10">
    <location>
        <begin position="312"/>
        <end position="318"/>
    </location>
</feature>
<feature type="strand" evidence="10">
    <location>
        <begin position="320"/>
        <end position="322"/>
    </location>
</feature>
<feature type="strand" evidence="10">
    <location>
        <begin position="324"/>
        <end position="332"/>
    </location>
</feature>
<feature type="strand" evidence="10">
    <location>
        <begin position="338"/>
        <end position="347"/>
    </location>
</feature>
<feature type="helix" evidence="10">
    <location>
        <begin position="350"/>
        <end position="352"/>
    </location>
</feature>
<feature type="strand" evidence="10">
    <location>
        <begin position="354"/>
        <end position="357"/>
    </location>
</feature>
<feature type="strand" evidence="11">
    <location>
        <begin position="359"/>
        <end position="361"/>
    </location>
</feature>
<feature type="strand" evidence="10">
    <location>
        <begin position="363"/>
        <end position="369"/>
    </location>
</feature>
<feature type="strand" evidence="10">
    <location>
        <begin position="375"/>
        <end position="383"/>
    </location>
</feature>
<feature type="strand" evidence="10">
    <location>
        <begin position="385"/>
        <end position="391"/>
    </location>
</feature>
<feature type="turn" evidence="10">
    <location>
        <begin position="392"/>
        <end position="395"/>
    </location>
</feature>
<feature type="strand" evidence="10">
    <location>
        <begin position="396"/>
        <end position="402"/>
    </location>
</feature>
<feature type="strand" evidence="10">
    <location>
        <begin position="405"/>
        <end position="414"/>
    </location>
</feature>
<feature type="strand" evidence="10">
    <location>
        <begin position="427"/>
        <end position="430"/>
    </location>
</feature>
<feature type="strand" evidence="10">
    <location>
        <begin position="433"/>
        <end position="435"/>
    </location>
</feature>
<feature type="strand" evidence="10">
    <location>
        <begin position="437"/>
        <end position="439"/>
    </location>
</feature>
<feature type="strand" evidence="10">
    <location>
        <begin position="442"/>
        <end position="444"/>
    </location>
</feature>
<feature type="turn" evidence="10">
    <location>
        <begin position="445"/>
        <end position="449"/>
    </location>
</feature>
<feature type="strand" evidence="10">
    <location>
        <begin position="455"/>
        <end position="461"/>
    </location>
</feature>
<feature type="strand" evidence="10">
    <location>
        <begin position="476"/>
        <end position="479"/>
    </location>
</feature>
<feature type="turn" evidence="10">
    <location>
        <begin position="483"/>
        <end position="485"/>
    </location>
</feature>
<feature type="strand" evidence="10">
    <location>
        <begin position="488"/>
        <end position="494"/>
    </location>
</feature>
<feature type="strand" evidence="10">
    <location>
        <begin position="502"/>
        <end position="504"/>
    </location>
</feature>
<feature type="turn" evidence="10">
    <location>
        <begin position="508"/>
        <end position="512"/>
    </location>
</feature>
<feature type="helix" evidence="10">
    <location>
        <begin position="516"/>
        <end position="518"/>
    </location>
</feature>
<feature type="strand" evidence="10">
    <location>
        <begin position="520"/>
        <end position="522"/>
    </location>
</feature>
<feature type="strand" evidence="10">
    <location>
        <begin position="524"/>
        <end position="526"/>
    </location>
</feature>
<feature type="strand" evidence="10">
    <location>
        <begin position="530"/>
        <end position="537"/>
    </location>
</feature>
<feature type="strand" evidence="10">
    <location>
        <begin position="544"/>
        <end position="552"/>
    </location>
</feature>
<feature type="strand" evidence="10">
    <location>
        <begin position="554"/>
        <end position="559"/>
    </location>
</feature>
<feature type="strand" evidence="10">
    <location>
        <begin position="565"/>
        <end position="568"/>
    </location>
</feature>
<feature type="strand" evidence="10">
    <location>
        <begin position="580"/>
        <end position="589"/>
    </location>
</feature>
<feature type="turn" evidence="10">
    <location>
        <begin position="590"/>
        <end position="593"/>
    </location>
</feature>
<feature type="helix" evidence="10">
    <location>
        <begin position="602"/>
        <end position="606"/>
    </location>
</feature>
<feature type="strand" evidence="10">
    <location>
        <begin position="621"/>
        <end position="626"/>
    </location>
</feature>
<feature type="strand" evidence="10">
    <location>
        <begin position="628"/>
        <end position="630"/>
    </location>
</feature>
<feature type="strand" evidence="10">
    <location>
        <begin position="632"/>
        <end position="636"/>
    </location>
</feature>
<feature type="helix" evidence="10">
    <location>
        <begin position="665"/>
        <end position="667"/>
    </location>
</feature>
<feature type="turn" evidence="10">
    <location>
        <begin position="673"/>
        <end position="676"/>
    </location>
</feature>
<feature type="helix" evidence="10">
    <location>
        <begin position="677"/>
        <end position="684"/>
    </location>
</feature>
<feature type="turn" evidence="10">
    <location>
        <begin position="685"/>
        <end position="688"/>
    </location>
</feature>
<feature type="strand" evidence="10">
    <location>
        <begin position="693"/>
        <end position="695"/>
    </location>
</feature>
<feature type="helix" evidence="10">
    <location>
        <begin position="714"/>
        <end position="719"/>
    </location>
</feature>
<feature type="turn" evidence="10">
    <location>
        <begin position="728"/>
        <end position="730"/>
    </location>
</feature>
<feature type="helix" evidence="10">
    <location>
        <begin position="744"/>
        <end position="749"/>
    </location>
</feature>
<feature type="strand" evidence="10">
    <location>
        <begin position="755"/>
        <end position="757"/>
    </location>
</feature>
<feature type="strand" evidence="10">
    <location>
        <begin position="759"/>
        <end position="761"/>
    </location>
</feature>
<feature type="strand" evidence="10">
    <location>
        <begin position="766"/>
        <end position="768"/>
    </location>
</feature>
<feature type="helix" evidence="10">
    <location>
        <begin position="778"/>
        <end position="789"/>
    </location>
</feature>
<feature type="strand" evidence="10">
    <location>
        <begin position="797"/>
        <end position="800"/>
    </location>
</feature>
<feature type="strand" evidence="10">
    <location>
        <begin position="802"/>
        <end position="804"/>
    </location>
</feature>
<proteinExistence type="evidence at protein level"/>
<sequence length="809" mass="90244">MGKRKLGVIASAFVAGALVCGSTLVNAEPVMTGGPVQGKALWTDYSGMSKEVQGPVSQILFTQSPRTAKGDPYQNYPHYIPEGSRIVLFDLNTKELKVLTNDFATAFDPCTYWDGKKFAFAGVHKKGGGCQIWEMNIDGSGLRQMTDLKGTCRSPIYYAAGSIEEGEGRIIWRDRYFEGDWKEHGMVEKTGMIIFSGSPEGVMDEFHNPYAYNLYRLDTQGGKIIQRITGHVLSGIEFPHLNTTIDQITYNLSSNFDPWLTPDGNILFSSVQANGSRAGGEGRVMICVDNWDGAYPRPIYGNCDGEIGGTSGRSQAKITFGDRKIVYVESPYMNWGVGQLAAVSWDAPFNKTYEKLTGKDGGLYRSPYPLPDDRMLVSYAERGDFGIYWFNFSKCAAGDKVYDDPNWNDHQPAPVYVKYKPRWINTFTAGKNFGVTVVTYQPFDQVKVEGYPHSWGTWICFDTTLSDQPVGPYPHQKAKNVSHGDIKAVRIIQGYQCVEPDSTRFRVGAGAHLLGGERSSSNSGTAFQQRGIIGYQYVESDGSTVTSQLSDVPYYMQILDDKGMSVQTALTWAYLRPYHGRICSGCHYGSYRGRAFKNIHAKALYNWWYDDRSHYDSPFAFRYLKFDNDGNYKGVKHGEDVVVPSDIYYGGPSGTTSQPVEGLTLDKQRTVDFRRDIQPILDAKCAMCHDSNNPPNLGGGLELVSVDGIAAYSRAYNSLLEPQRGKDPNIGGKYVNPSAAINSLLVWRLYEAELSANAPREKIFPIEGRLLHNKFLTQDERYAIVEWIDLGAQWDNIPGPDFYPGYLVK</sequence>
<organism>
    <name type="scientific">Kuenenia stuttgartiensis</name>
    <dbReference type="NCBI Taxonomy" id="174633"/>
    <lineage>
        <taxon>Bacteria</taxon>
        <taxon>Pseudomonadati</taxon>
        <taxon>Planctomycetota</taxon>
        <taxon>Candidatus Brocadiia</taxon>
        <taxon>Candidatus Brocadiales</taxon>
        <taxon>Candidatus Brocadiaceae</taxon>
        <taxon>Candidatus Kuenenia</taxon>
    </lineage>
</organism>
<comment type="function">
    <text evidence="3 4">Component of the hydrazine synthase complex that catalyzes the condensation of nitric oxide (NO) with ammonium to form hydrazine (PubMed:21964329). The alpha subunit catalyzes the second half-reaction, i.e. the condensation of hydroxylamine formed in the active site of the gamma subunit with ammonia, yielding hydrazine (PubMed:26479033). Is involved in anaerobic ammonium oxidation (anammox), a biological process in which nitrite is used as the electron acceptor in the conversion of ammonium to dinitrogen gas (N2) and water; this bacterial process has a major role in the Earth's nitrogen cycle and has been estimated to synthesize up to 50% of the dinitrogen gas emitted into our atmosphere from the oceans (PubMed:21964329, PubMed:26479033).</text>
</comment>
<comment type="catalytic activity">
    <reaction evidence="3">
        <text>hydrazine + 3 Fe(III)-[cytochrome c] + H2O = nitric oxide + 3 Fe(II)-[cytochrome c] + NH4(+) + 2 H(+)</text>
        <dbReference type="Rhea" id="RHEA:49816"/>
        <dbReference type="Rhea" id="RHEA-COMP:10350"/>
        <dbReference type="Rhea" id="RHEA-COMP:14399"/>
        <dbReference type="ChEBI" id="CHEBI:15377"/>
        <dbReference type="ChEBI" id="CHEBI:15378"/>
        <dbReference type="ChEBI" id="CHEBI:15571"/>
        <dbReference type="ChEBI" id="CHEBI:16480"/>
        <dbReference type="ChEBI" id="CHEBI:28938"/>
        <dbReference type="ChEBI" id="CHEBI:29033"/>
        <dbReference type="ChEBI" id="CHEBI:29034"/>
        <dbReference type="EC" id="1.7.2.7"/>
    </reaction>
</comment>
<comment type="cofactor">
    <cofactor evidence="4">
        <name>heme c</name>
        <dbReference type="ChEBI" id="CHEBI:61717"/>
    </cofactor>
    <text evidence="4">Binds two heme c groups per subunit.</text>
</comment>
<comment type="pathway">
    <text evidence="3">Nitrogen metabolism.</text>
</comment>
<comment type="subunit">
    <text evidence="4">Part of the hydrazine synthase complex that forms an elongated dimer of heterotrimers composed of one alpha, one beta and one gamma subunit.</text>
</comment>
<comment type="subcellular location">
    <subcellularLocation>
        <location evidence="6">Anammoxosome</location>
    </subcellularLocation>
</comment>
<comment type="induction">
    <text evidence="3">Is among the most highly expressed proteins in the proteome.</text>
</comment>
<comment type="domain">
    <text evidence="4">The alpha subunit consists of three domains: an N-terminal domain which includes a six-bladed beta-propeller, a middle domain binding a pentacoordinated c-type heme and a C-terminal domain which harbors a bis-histidine-coordinated c-type heme.</text>
</comment>